<comment type="function">
    <text evidence="3">Component of neuronal acetylcholine receptors (nAChRs) that function as pentameric, ligand-gated cation channels with high calcium permeability among other activities. nAChRs are excitatory neurotrasnmitter receptors formed by a collection of nAChR subunits known to mediate synaptic transmission in the nervous system and the neuromuscular junction. Each nAchR subunit confers differential attributes to channel properties, including activation, deactivation and desensitization kinetics, pH sensitivity, cation permeability, and binding to allosteric modulators. Has an accessory rather than functional role and is only able to form functional nAChRs when co-assembled with another beta subunit. Participates in pentameric assemblies along with CHRNA3, CHRNA4, CHRNA6, CHRNB2 and CHRNB4. Modulates receptor assembly and increases receptor sensitivity to nicotine when associated with CHRNB2, CHRNA4 and/or CHRNA6 as well as CHRNA3 and CHRNB4. Seems to play a role in nicotine addiction.</text>
</comment>
<comment type="catalytic activity">
    <reaction evidence="2">
        <text>Ca(2+)(in) = Ca(2+)(out)</text>
        <dbReference type="Rhea" id="RHEA:29671"/>
        <dbReference type="ChEBI" id="CHEBI:29108"/>
    </reaction>
</comment>
<comment type="catalytic activity">
    <reaction evidence="2">
        <text>K(+)(in) = K(+)(out)</text>
        <dbReference type="Rhea" id="RHEA:29463"/>
        <dbReference type="ChEBI" id="CHEBI:29103"/>
    </reaction>
</comment>
<comment type="catalytic activity">
    <reaction evidence="2">
        <text>Na(+)(in) = Na(+)(out)</text>
        <dbReference type="Rhea" id="RHEA:34963"/>
        <dbReference type="ChEBI" id="CHEBI:29101"/>
    </reaction>
</comment>
<comment type="activity regulation">
    <text evidence="3">Activated by a myriad of ligands such as acetylcholine, cytisine, nicotine, choline and epibatidine.</text>
</comment>
<comment type="subunit">
    <text evidence="3">Neuronal AChR seems to be composed of two different type of subunits: alpha and beta. CHRNB3/beta-3 subunit is only able to form functional nAChRs when co-assembled with another beta subunit. Participates in pentameric assemblies along with CHRNA4/alpha-4 and CHRNB2/beta-2 subunits and with CHRNA6/alpha-6 as well, forming stoichiometries such as (CHRNA3:CHRNB4)2:CHRNB3, (CHRNA4:CHRNB2)2:CHRNB3 or (CHRNA6:CHRNB2)2:CHRNB3.</text>
</comment>
<comment type="subcellular location">
    <subcellularLocation>
        <location evidence="1">Synaptic cell membrane</location>
        <topology evidence="4">Multi-pass membrane protein</topology>
    </subcellularLocation>
    <subcellularLocation>
        <location evidence="1">Cell membrane</location>
        <topology evidence="4">Multi-pass membrane protein</topology>
    </subcellularLocation>
</comment>
<comment type="similarity">
    <text evidence="5">Belongs to the ligand-gated ion channel (TC 1.A.9) family. Acetylcholine receptor (TC 1.A.9.1) subfamily. Beta-3/CHRNB3 sub-subfamily.</text>
</comment>
<evidence type="ECO:0000250" key="1">
    <source>
        <dbReference type="UniProtKB" id="O70174"/>
    </source>
</evidence>
<evidence type="ECO:0000250" key="2">
    <source>
        <dbReference type="UniProtKB" id="P04758"/>
    </source>
</evidence>
<evidence type="ECO:0000250" key="3">
    <source>
        <dbReference type="UniProtKB" id="Q05901"/>
    </source>
</evidence>
<evidence type="ECO:0000255" key="4"/>
<evidence type="ECO:0000305" key="5"/>
<feature type="signal peptide" evidence="4">
    <location>
        <begin position="1"/>
        <end position="24"/>
    </location>
</feature>
<feature type="chain" id="PRO_0000000385" description="Neuronal acetylcholine receptor subunit beta-3">
    <location>
        <begin position="25"/>
        <end position="458"/>
    </location>
</feature>
<feature type="topological domain" description="Extracellular" evidence="4">
    <location>
        <begin position="25"/>
        <end position="232"/>
    </location>
</feature>
<feature type="transmembrane region" description="Helical" evidence="4">
    <location>
        <begin position="233"/>
        <end position="257"/>
    </location>
</feature>
<feature type="transmembrane region" description="Helical" evidence="4">
    <location>
        <begin position="265"/>
        <end position="282"/>
    </location>
</feature>
<feature type="transmembrane region" description="Helical" evidence="4">
    <location>
        <begin position="299"/>
        <end position="320"/>
    </location>
</feature>
<feature type="topological domain" description="Cytoplasmic" evidence="4">
    <location>
        <begin position="321"/>
        <end position="428"/>
    </location>
</feature>
<feature type="transmembrane region" description="Helical" evidence="4">
    <location>
        <begin position="429"/>
        <end position="447"/>
    </location>
</feature>
<feature type="glycosylation site" description="N-linked (GlcNAc...) asparagine" evidence="4">
    <location>
        <position position="51"/>
    </location>
</feature>
<feature type="glycosylation site" description="N-linked (GlcNAc...) asparagine" evidence="4">
    <location>
        <position position="138"/>
    </location>
</feature>
<feature type="glycosylation site" description="N-linked (GlcNAc...) asparagine" evidence="4">
    <location>
        <position position="166"/>
    </location>
</feature>
<feature type="disulfide bond" evidence="3">
    <location>
        <begin position="153"/>
        <end position="167"/>
    </location>
</feature>
<accession>Q5IS75</accession>
<organism>
    <name type="scientific">Pan troglodytes</name>
    <name type="common">Chimpanzee</name>
    <dbReference type="NCBI Taxonomy" id="9598"/>
    <lineage>
        <taxon>Eukaryota</taxon>
        <taxon>Metazoa</taxon>
        <taxon>Chordata</taxon>
        <taxon>Craniata</taxon>
        <taxon>Vertebrata</taxon>
        <taxon>Euteleostomi</taxon>
        <taxon>Mammalia</taxon>
        <taxon>Eutheria</taxon>
        <taxon>Euarchontoglires</taxon>
        <taxon>Primates</taxon>
        <taxon>Haplorrhini</taxon>
        <taxon>Catarrhini</taxon>
        <taxon>Hominidae</taxon>
        <taxon>Pan</taxon>
    </lineage>
</organism>
<sequence>MLPDFMLVLIVLGIPSSATTGFNSIAENEDALLRHLFQGYQKWVRPVLHSNDTIKVYFGLKISQLVDVDEKNQLMTTNVWLKQEWTDHKLRWNPDDYGGIHSIKVPSESLWLPDIVLFENADGRFEGSLMTKVIVKSNGTVVWTPPASYKSSCTMDVTFFPFDRQNCSMKFGSWTYDGTMVDLILINENVDRKDFFDNGEWEILNAKGMKGNRRDGVYSYPFITYSFVLRRLPLFYTLFLIIPCLGLSFLTVLVFYLPSDEGEKLSLSTSVLVSLTVFLLVIEEIIPSSSKVIPLIGEYLLFIMIFVTLSIIVTVFVINVHHRSSSTYHPMAPWVKRLFLQKLPKLLCMKDHVDRYSSPEKEESQPVVKGKVLEKKKQKQLSDGEKVLVAFLEKAADSIRYISRHVKKEHFISQVVQDWKFVAQVLDRIFLWLFLIVSVTGSVLIFTPALKMWLHSYH</sequence>
<name>ACHB3_PANTR</name>
<dbReference type="EMBL" id="AY665253">
    <property type="protein sequence ID" value="AAV74291.1"/>
    <property type="molecule type" value="mRNA"/>
</dbReference>
<dbReference type="RefSeq" id="NP_001029105.1">
    <property type="nucleotide sequence ID" value="NM_001033933.1"/>
</dbReference>
<dbReference type="SMR" id="Q5IS75"/>
<dbReference type="FunCoup" id="Q5IS75">
    <property type="interactions" value="378"/>
</dbReference>
<dbReference type="STRING" id="9598.ENSPTRP00000054732"/>
<dbReference type="GlyCosmos" id="Q5IS75">
    <property type="glycosylation" value="3 sites, No reported glycans"/>
</dbReference>
<dbReference type="PaxDb" id="9598-ENSPTRP00000054732"/>
<dbReference type="Ensembl" id="ENSPTRT00000062178.3">
    <property type="protein sequence ID" value="ENSPTRP00000054732.3"/>
    <property type="gene ID" value="ENSPTRG00000020209.6"/>
</dbReference>
<dbReference type="GeneID" id="464500"/>
<dbReference type="KEGG" id="ptr:464500"/>
<dbReference type="CTD" id="1142"/>
<dbReference type="VGNC" id="VGNC:7590">
    <property type="gene designation" value="CHRNB3"/>
</dbReference>
<dbReference type="eggNOG" id="KOG3645">
    <property type="taxonomic scope" value="Eukaryota"/>
</dbReference>
<dbReference type="GeneTree" id="ENSGT00940000156892"/>
<dbReference type="InParanoid" id="Q5IS75"/>
<dbReference type="OMA" id="QMWASIV"/>
<dbReference type="OrthoDB" id="6404at9604"/>
<dbReference type="Proteomes" id="UP000002277">
    <property type="component" value="Chromosome 8"/>
</dbReference>
<dbReference type="Bgee" id="ENSPTRG00000020209">
    <property type="expression patterns" value="Expressed in dorsolateral prefrontal cortex and 3 other cell types or tissues"/>
</dbReference>
<dbReference type="GO" id="GO:0005892">
    <property type="term" value="C:acetylcholine-gated channel complex"/>
    <property type="evidence" value="ECO:0000318"/>
    <property type="project" value="GO_Central"/>
</dbReference>
<dbReference type="GO" id="GO:0034703">
    <property type="term" value="C:cation channel complex"/>
    <property type="evidence" value="ECO:0007669"/>
    <property type="project" value="Ensembl"/>
</dbReference>
<dbReference type="GO" id="GO:0043005">
    <property type="term" value="C:neuron projection"/>
    <property type="evidence" value="ECO:0000318"/>
    <property type="project" value="GO_Central"/>
</dbReference>
<dbReference type="GO" id="GO:0098878">
    <property type="term" value="C:neurotransmitter receptor complex"/>
    <property type="evidence" value="ECO:0007669"/>
    <property type="project" value="Ensembl"/>
</dbReference>
<dbReference type="GO" id="GO:0005886">
    <property type="term" value="C:plasma membrane"/>
    <property type="evidence" value="ECO:0000318"/>
    <property type="project" value="GO_Central"/>
</dbReference>
<dbReference type="GO" id="GO:0045211">
    <property type="term" value="C:postsynaptic membrane"/>
    <property type="evidence" value="ECO:0007669"/>
    <property type="project" value="UniProtKB-KW"/>
</dbReference>
<dbReference type="GO" id="GO:0045202">
    <property type="term" value="C:synapse"/>
    <property type="evidence" value="ECO:0000318"/>
    <property type="project" value="GO_Central"/>
</dbReference>
<dbReference type="GO" id="GO:0022848">
    <property type="term" value="F:acetylcholine-gated monoatomic cation-selective channel activity"/>
    <property type="evidence" value="ECO:0000318"/>
    <property type="project" value="GO_Central"/>
</dbReference>
<dbReference type="GO" id="GO:0004888">
    <property type="term" value="F:transmembrane signaling receptor activity"/>
    <property type="evidence" value="ECO:0007669"/>
    <property type="project" value="InterPro"/>
</dbReference>
<dbReference type="GO" id="GO:0095500">
    <property type="term" value="P:acetylcholine receptor signaling pathway"/>
    <property type="evidence" value="ECO:0000318"/>
    <property type="project" value="GO_Central"/>
</dbReference>
<dbReference type="GO" id="GO:0051899">
    <property type="term" value="P:membrane depolarization"/>
    <property type="evidence" value="ECO:0000318"/>
    <property type="project" value="GO_Central"/>
</dbReference>
<dbReference type="GO" id="GO:0034220">
    <property type="term" value="P:monoatomic ion transmembrane transport"/>
    <property type="evidence" value="ECO:0000318"/>
    <property type="project" value="GO_Central"/>
</dbReference>
<dbReference type="GO" id="GO:0007274">
    <property type="term" value="P:neuromuscular synaptic transmission"/>
    <property type="evidence" value="ECO:0000318"/>
    <property type="project" value="GO_Central"/>
</dbReference>
<dbReference type="GO" id="GO:0035094">
    <property type="term" value="P:response to nicotine"/>
    <property type="evidence" value="ECO:0000318"/>
    <property type="project" value="GO_Central"/>
</dbReference>
<dbReference type="GO" id="GO:0007271">
    <property type="term" value="P:synaptic transmission, cholinergic"/>
    <property type="evidence" value="ECO:0000318"/>
    <property type="project" value="GO_Central"/>
</dbReference>
<dbReference type="CDD" id="cd19026">
    <property type="entry name" value="LGIC_ECD_nAChR_B3"/>
    <property type="match status" value="1"/>
</dbReference>
<dbReference type="CDD" id="cd19064">
    <property type="entry name" value="LGIC_TM_nAChR"/>
    <property type="match status" value="1"/>
</dbReference>
<dbReference type="FunFam" id="1.20.58.390:FF:000025">
    <property type="entry name" value="Cholinergic receptor nicotinic beta 3 subunit"/>
    <property type="match status" value="1"/>
</dbReference>
<dbReference type="FunFam" id="2.70.170.10:FF:000005">
    <property type="entry name" value="Neuronal nicotinic acetylcholine receptor alpha4 subunit"/>
    <property type="match status" value="1"/>
</dbReference>
<dbReference type="FunFam" id="1.20.58.390:FF:000001">
    <property type="entry name" value="Neuronal nicotinic acetylcholine receptor subunit 3"/>
    <property type="match status" value="1"/>
</dbReference>
<dbReference type="Gene3D" id="2.70.170.10">
    <property type="entry name" value="Neurotransmitter-gated ion-channel ligand-binding domain"/>
    <property type="match status" value="1"/>
</dbReference>
<dbReference type="Gene3D" id="1.20.58.390">
    <property type="entry name" value="Neurotransmitter-gated ion-channel transmembrane domain"/>
    <property type="match status" value="2"/>
</dbReference>
<dbReference type="InterPro" id="IPR006202">
    <property type="entry name" value="Neur_chan_lig-bd"/>
</dbReference>
<dbReference type="InterPro" id="IPR036734">
    <property type="entry name" value="Neur_chan_lig-bd_sf"/>
</dbReference>
<dbReference type="InterPro" id="IPR006201">
    <property type="entry name" value="Neur_channel"/>
</dbReference>
<dbReference type="InterPro" id="IPR036719">
    <property type="entry name" value="Neuro-gated_channel_TM_sf"/>
</dbReference>
<dbReference type="InterPro" id="IPR038050">
    <property type="entry name" value="Neuro_actylchol_rec"/>
</dbReference>
<dbReference type="InterPro" id="IPR006029">
    <property type="entry name" value="Neurotrans-gated_channel_TM"/>
</dbReference>
<dbReference type="InterPro" id="IPR018000">
    <property type="entry name" value="Neurotransmitter_ion_chnl_CS"/>
</dbReference>
<dbReference type="InterPro" id="IPR002394">
    <property type="entry name" value="Nicotinic_acetylcholine_rcpt"/>
</dbReference>
<dbReference type="NCBIfam" id="TIGR00860">
    <property type="entry name" value="LIC"/>
    <property type="match status" value="1"/>
</dbReference>
<dbReference type="PANTHER" id="PTHR18945">
    <property type="entry name" value="NEUROTRANSMITTER GATED ION CHANNEL"/>
    <property type="match status" value="1"/>
</dbReference>
<dbReference type="Pfam" id="PF02931">
    <property type="entry name" value="Neur_chan_LBD"/>
    <property type="match status" value="1"/>
</dbReference>
<dbReference type="Pfam" id="PF02932">
    <property type="entry name" value="Neur_chan_memb"/>
    <property type="match status" value="1"/>
</dbReference>
<dbReference type="PRINTS" id="PR00254">
    <property type="entry name" value="NICOTINICR"/>
</dbReference>
<dbReference type="PRINTS" id="PR00252">
    <property type="entry name" value="NRIONCHANNEL"/>
</dbReference>
<dbReference type="SUPFAM" id="SSF90112">
    <property type="entry name" value="Neurotransmitter-gated ion-channel transmembrane pore"/>
    <property type="match status" value="1"/>
</dbReference>
<dbReference type="SUPFAM" id="SSF63712">
    <property type="entry name" value="Nicotinic receptor ligand binding domain-like"/>
    <property type="match status" value="1"/>
</dbReference>
<dbReference type="PROSITE" id="PS00236">
    <property type="entry name" value="NEUROTR_ION_CHANNEL"/>
    <property type="match status" value="1"/>
</dbReference>
<keyword id="KW-1003">Cell membrane</keyword>
<keyword id="KW-1015">Disulfide bond</keyword>
<keyword id="KW-0325">Glycoprotein</keyword>
<keyword id="KW-0407">Ion channel</keyword>
<keyword id="KW-0406">Ion transport</keyword>
<keyword id="KW-1071">Ligand-gated ion channel</keyword>
<keyword id="KW-0472">Membrane</keyword>
<keyword id="KW-0675">Receptor</keyword>
<keyword id="KW-1185">Reference proteome</keyword>
<keyword id="KW-0732">Signal</keyword>
<keyword id="KW-0770">Synapse</keyword>
<keyword id="KW-0812">Transmembrane</keyword>
<keyword id="KW-1133">Transmembrane helix</keyword>
<keyword id="KW-0813">Transport</keyword>
<protein>
    <recommendedName>
        <fullName>Neuronal acetylcholine receptor subunit beta-3</fullName>
    </recommendedName>
</protein>
<reference key="1">
    <citation type="journal article" date="2004" name="Cell">
        <title>Accelerated evolution of nervous system genes in the origin of Homo sapiens.</title>
        <authorList>
            <person name="Dorus S."/>
            <person name="Vallender E.J."/>
            <person name="Evans P.D."/>
            <person name="Anderson J.R."/>
            <person name="Gilbert S.L."/>
            <person name="Mahowald M."/>
            <person name="Wyckoff G.J."/>
            <person name="Malcom C.M."/>
            <person name="Lahn B.T."/>
        </authorList>
    </citation>
    <scope>NUCLEOTIDE SEQUENCE [MRNA]</scope>
</reference>
<proteinExistence type="evidence at transcript level"/>
<gene>
    <name type="primary">CHRNB3</name>
</gene>